<feature type="chain" id="PRO_0000228317" description="Holo-[acyl-carrier-protein] synthase">
    <location>
        <begin position="1"/>
        <end position="125"/>
    </location>
</feature>
<feature type="binding site" evidence="1">
    <location>
        <position position="8"/>
    </location>
    <ligand>
        <name>Mg(2+)</name>
        <dbReference type="ChEBI" id="CHEBI:18420"/>
    </ligand>
</feature>
<feature type="binding site" evidence="1">
    <location>
        <position position="60"/>
    </location>
    <ligand>
        <name>Mg(2+)</name>
        <dbReference type="ChEBI" id="CHEBI:18420"/>
    </ligand>
</feature>
<dbReference type="EC" id="2.7.8.7" evidence="1"/>
<dbReference type="EMBL" id="AE017321">
    <property type="protein sequence ID" value="AAW70670.1"/>
    <property type="molecule type" value="Genomic_DNA"/>
</dbReference>
<dbReference type="RefSeq" id="WP_011256280.1">
    <property type="nucleotide sequence ID" value="NC_006833.1"/>
</dbReference>
<dbReference type="SMR" id="Q5GTK4"/>
<dbReference type="STRING" id="292805.Wbm0078"/>
<dbReference type="KEGG" id="wbm:Wbm0078"/>
<dbReference type="eggNOG" id="COG0736">
    <property type="taxonomic scope" value="Bacteria"/>
</dbReference>
<dbReference type="HOGENOM" id="CLU_089696_3_1_5"/>
<dbReference type="Proteomes" id="UP000000534">
    <property type="component" value="Chromosome"/>
</dbReference>
<dbReference type="GO" id="GO:0005737">
    <property type="term" value="C:cytoplasm"/>
    <property type="evidence" value="ECO:0007669"/>
    <property type="project" value="UniProtKB-SubCell"/>
</dbReference>
<dbReference type="GO" id="GO:0008897">
    <property type="term" value="F:holo-[acyl-carrier-protein] synthase activity"/>
    <property type="evidence" value="ECO:0007669"/>
    <property type="project" value="UniProtKB-UniRule"/>
</dbReference>
<dbReference type="GO" id="GO:0000287">
    <property type="term" value="F:magnesium ion binding"/>
    <property type="evidence" value="ECO:0007669"/>
    <property type="project" value="UniProtKB-UniRule"/>
</dbReference>
<dbReference type="GO" id="GO:0006633">
    <property type="term" value="P:fatty acid biosynthetic process"/>
    <property type="evidence" value="ECO:0007669"/>
    <property type="project" value="UniProtKB-UniRule"/>
</dbReference>
<dbReference type="Gene3D" id="3.90.470.20">
    <property type="entry name" value="4'-phosphopantetheinyl transferase domain"/>
    <property type="match status" value="1"/>
</dbReference>
<dbReference type="HAMAP" id="MF_00101">
    <property type="entry name" value="AcpS"/>
    <property type="match status" value="1"/>
</dbReference>
<dbReference type="InterPro" id="IPR008278">
    <property type="entry name" value="4-PPantetheinyl_Trfase_dom"/>
</dbReference>
<dbReference type="InterPro" id="IPR037143">
    <property type="entry name" value="4-PPantetheinyl_Trfase_dom_sf"/>
</dbReference>
<dbReference type="InterPro" id="IPR002582">
    <property type="entry name" value="ACPS"/>
</dbReference>
<dbReference type="InterPro" id="IPR004568">
    <property type="entry name" value="Ppantetheine-prot_Trfase_dom"/>
</dbReference>
<dbReference type="NCBIfam" id="TIGR00516">
    <property type="entry name" value="acpS"/>
    <property type="match status" value="1"/>
</dbReference>
<dbReference type="NCBIfam" id="TIGR00556">
    <property type="entry name" value="pantethn_trn"/>
    <property type="match status" value="1"/>
</dbReference>
<dbReference type="NCBIfam" id="NF011253">
    <property type="entry name" value="PRK14659.1"/>
    <property type="match status" value="1"/>
</dbReference>
<dbReference type="Pfam" id="PF01648">
    <property type="entry name" value="ACPS"/>
    <property type="match status" value="1"/>
</dbReference>
<dbReference type="SUPFAM" id="SSF56214">
    <property type="entry name" value="4'-phosphopantetheinyl transferase"/>
    <property type="match status" value="1"/>
</dbReference>
<reference key="1">
    <citation type="journal article" date="2005" name="PLoS Biol.">
        <title>The Wolbachia genome of Brugia malayi: endosymbiont evolution within a human pathogenic nematode.</title>
        <authorList>
            <person name="Foster J."/>
            <person name="Ganatra M."/>
            <person name="Kamal I."/>
            <person name="Ware J."/>
            <person name="Makarova K."/>
            <person name="Ivanova N."/>
            <person name="Bhattacharyya A."/>
            <person name="Kapatral V."/>
            <person name="Kumar S."/>
            <person name="Posfai J."/>
            <person name="Vincze T."/>
            <person name="Ingram J."/>
            <person name="Moran L."/>
            <person name="Lapidus A."/>
            <person name="Omelchenko M."/>
            <person name="Kyrpides N."/>
            <person name="Ghedin E."/>
            <person name="Wang S."/>
            <person name="Goltsman E."/>
            <person name="Joukov V."/>
            <person name="Ostrovskaya O."/>
            <person name="Tsukerman K."/>
            <person name="Mazur M."/>
            <person name="Comb D."/>
            <person name="Koonin E."/>
            <person name="Slatko B."/>
        </authorList>
    </citation>
    <scope>NUCLEOTIDE SEQUENCE [LARGE SCALE GENOMIC DNA]</scope>
    <source>
        <strain>TRS</strain>
    </source>
</reference>
<evidence type="ECO:0000255" key="1">
    <source>
        <dbReference type="HAMAP-Rule" id="MF_00101"/>
    </source>
</evidence>
<proteinExistence type="inferred from homology"/>
<keyword id="KW-0963">Cytoplasm</keyword>
<keyword id="KW-0275">Fatty acid biosynthesis</keyword>
<keyword id="KW-0276">Fatty acid metabolism</keyword>
<keyword id="KW-0444">Lipid biosynthesis</keyword>
<keyword id="KW-0443">Lipid metabolism</keyword>
<keyword id="KW-0460">Magnesium</keyword>
<keyword id="KW-0479">Metal-binding</keyword>
<keyword id="KW-1185">Reference proteome</keyword>
<keyword id="KW-0808">Transferase</keyword>
<gene>
    <name evidence="1" type="primary">acpS</name>
    <name type="ordered locus">Wbm0078</name>
</gene>
<name>ACPS_WOLTR</name>
<comment type="function">
    <text evidence="1">Transfers the 4'-phosphopantetheine moiety from coenzyme A to a Ser of acyl-carrier-protein.</text>
</comment>
<comment type="catalytic activity">
    <reaction evidence="1">
        <text>apo-[ACP] + CoA = holo-[ACP] + adenosine 3',5'-bisphosphate + H(+)</text>
        <dbReference type="Rhea" id="RHEA:12068"/>
        <dbReference type="Rhea" id="RHEA-COMP:9685"/>
        <dbReference type="Rhea" id="RHEA-COMP:9690"/>
        <dbReference type="ChEBI" id="CHEBI:15378"/>
        <dbReference type="ChEBI" id="CHEBI:29999"/>
        <dbReference type="ChEBI" id="CHEBI:57287"/>
        <dbReference type="ChEBI" id="CHEBI:58343"/>
        <dbReference type="ChEBI" id="CHEBI:64479"/>
        <dbReference type="EC" id="2.7.8.7"/>
    </reaction>
</comment>
<comment type="cofactor">
    <cofactor evidence="1">
        <name>Mg(2+)</name>
        <dbReference type="ChEBI" id="CHEBI:18420"/>
    </cofactor>
</comment>
<comment type="subcellular location">
    <subcellularLocation>
        <location evidence="1">Cytoplasm</location>
    </subcellularLocation>
</comment>
<comment type="similarity">
    <text evidence="1">Belongs to the P-Pant transferase superfamily. AcpS family.</text>
</comment>
<protein>
    <recommendedName>
        <fullName evidence="1">Holo-[acyl-carrier-protein] synthase</fullName>
        <shortName evidence="1">Holo-ACP synthase</shortName>
        <ecNumber evidence="1">2.7.8.7</ecNumber>
    </recommendedName>
    <alternativeName>
        <fullName evidence="1">4'-phosphopantetheinyl transferase AcpS</fullName>
    </alternativeName>
</protein>
<organism>
    <name type="scientific">Wolbachia sp. subsp. Brugia malayi (strain TRS)</name>
    <dbReference type="NCBI Taxonomy" id="292805"/>
    <lineage>
        <taxon>Bacteria</taxon>
        <taxon>Pseudomonadati</taxon>
        <taxon>Pseudomonadota</taxon>
        <taxon>Alphaproteobacteria</taxon>
        <taxon>Rickettsiales</taxon>
        <taxon>Anaplasmataceae</taxon>
        <taxon>Wolbachieae</taxon>
        <taxon>Wolbachia</taxon>
    </lineage>
</organism>
<sequence>MIRGIGTDIVYIPRILRILQKYGKKFLNKIYTEQEIEISRKYNSQEMQAKYLAKRFAAKEAFVKALGGFSHGIIMKDIEIYNDVRGKPHLTVSKNFIFKDHMIHLSLSDDGDCATAFVIICSSLP</sequence>
<accession>Q5GTK4</accession>